<evidence type="ECO:0000255" key="1"/>
<evidence type="ECO:0000255" key="2">
    <source>
        <dbReference type="PROSITE-ProRule" id="PRU00521"/>
    </source>
</evidence>
<evidence type="ECO:0000269" key="3">
    <source>
    </source>
</evidence>
<evidence type="ECO:0000303" key="4">
    <source>
    </source>
</evidence>
<evidence type="ECO:0000305" key="5"/>
<evidence type="ECO:0000312" key="6">
    <source>
        <dbReference type="MGI" id="MGI:2177526"/>
    </source>
</evidence>
<feature type="chain" id="PRO_0000150820" description="Olfactory receptor 8C8">
    <location>
        <begin position="1"/>
        <end position="313"/>
    </location>
</feature>
<feature type="topological domain" description="Extracellular" evidence="1">
    <location>
        <begin position="1"/>
        <end position="27"/>
    </location>
</feature>
<feature type="transmembrane region" description="Helical; Name=1" evidence="1">
    <location>
        <begin position="28"/>
        <end position="48"/>
    </location>
</feature>
<feature type="topological domain" description="Cytoplasmic" evidence="1">
    <location>
        <begin position="49"/>
        <end position="59"/>
    </location>
</feature>
<feature type="transmembrane region" description="Helical; Name=2" evidence="1">
    <location>
        <begin position="60"/>
        <end position="80"/>
    </location>
</feature>
<feature type="topological domain" description="Extracellular" evidence="1">
    <location>
        <begin position="81"/>
        <end position="96"/>
    </location>
</feature>
<feature type="transmembrane region" description="Helical; Name=3" evidence="1">
    <location>
        <begin position="97"/>
        <end position="117"/>
    </location>
</feature>
<feature type="topological domain" description="Cytoplasmic" evidence="1">
    <location>
        <begin position="118"/>
        <end position="136"/>
    </location>
</feature>
<feature type="transmembrane region" description="Helical; Name=4" evidence="1">
    <location>
        <begin position="137"/>
        <end position="157"/>
    </location>
</feature>
<feature type="topological domain" description="Extracellular" evidence="1">
    <location>
        <begin position="158"/>
        <end position="208"/>
    </location>
</feature>
<feature type="transmembrane region" description="Helical; Name=5" evidence="1">
    <location>
        <begin position="209"/>
        <end position="229"/>
    </location>
</feature>
<feature type="topological domain" description="Cytoplasmic" evidence="1">
    <location>
        <begin position="230"/>
        <end position="239"/>
    </location>
</feature>
<feature type="transmembrane region" description="Helical; Name=6" evidence="1">
    <location>
        <begin position="240"/>
        <end position="260"/>
    </location>
</feature>
<feature type="topological domain" description="Extracellular" evidence="1">
    <location>
        <begin position="261"/>
        <end position="274"/>
    </location>
</feature>
<feature type="transmembrane region" description="Helical; Name=7" evidence="1">
    <location>
        <begin position="275"/>
        <end position="295"/>
    </location>
</feature>
<feature type="topological domain" description="Cytoplasmic" evidence="1">
    <location>
        <begin position="296"/>
        <end position="313"/>
    </location>
</feature>
<feature type="glycosylation site" description="N-linked (GlcNAc...) asparagine" evidence="1">
    <location>
        <position position="8"/>
    </location>
</feature>
<feature type="disulfide bond" evidence="2">
    <location>
        <begin position="100"/>
        <end position="192"/>
    </location>
</feature>
<name>OL143_MOUSE</name>
<reference key="1">
    <citation type="journal article" date="2000" name="Mamm. Genome">
        <title>Characterization of a cluster comprising 100 odorant receptor genes in mouse.</title>
        <authorList>
            <person name="Xie S.Y."/>
            <person name="Feinstein P."/>
            <person name="Mombaerts P."/>
        </authorList>
    </citation>
    <scope>NUCLEOTIDE SEQUENCE [GENOMIC DNA]</scope>
    <source>
        <strain>129/SvJ</strain>
    </source>
</reference>
<reference key="2">
    <citation type="journal article" date="2002" name="Nat. Neurosci.">
        <title>The olfactory receptor gene superfamily of the mouse.</title>
        <authorList>
            <person name="Zhang X."/>
            <person name="Firestein S."/>
        </authorList>
    </citation>
    <scope>NUCLEOTIDE SEQUENCE [GENOMIC DNA]</scope>
</reference>
<reference key="3">
    <citation type="journal article" date="2002" name="Hum. Mol. Genet.">
        <title>Different evolutionary processes shaped the mouse and human olfactory receptor gene families.</title>
        <authorList>
            <person name="Young J.M."/>
            <person name="Friedman C."/>
            <person name="Williams E.M."/>
            <person name="Ross J.A."/>
            <person name="Tonnes-Priddy L."/>
            <person name="Trask B.J."/>
        </authorList>
    </citation>
    <scope>NUCLEOTIDE SEQUENCE [GENOMIC DNA]</scope>
</reference>
<reference key="4">
    <citation type="journal article" date="2002" name="Hum. Mol. Genet.">
        <authorList>
            <person name="Young J.M."/>
            <person name="Friedman C."/>
            <person name="Williams E.M."/>
            <person name="Ross J.A."/>
            <person name="Tonnes-Priddy L."/>
            <person name="Trask B.J."/>
        </authorList>
    </citation>
    <scope>ERRATUM OF PUBMED:11875048</scope>
</reference>
<reference key="5">
    <citation type="journal article" date="1993" name="Cell">
        <title>A zonal organization of odorant receptor gene expression in the olfactory epithelium.</title>
        <authorList>
            <person name="Ressler K.J."/>
            <person name="Sullivan S.L."/>
            <person name="Buck L.B."/>
        </authorList>
    </citation>
    <scope>NUCLEOTIDE SEQUENCE [GENOMIC DNA] OF 125-285</scope>
    <scope>TISSUE SPECIFICITY</scope>
    <source>
        <strain>C57BL/6J</strain>
        <tissue>Liver</tissue>
    </source>
</reference>
<protein>
    <recommendedName>
        <fullName evidence="5">Olfactory receptor 8C8</fullName>
    </recommendedName>
    <alternativeName>
        <fullName evidence="4">Odorant receptor K18</fullName>
    </alternativeName>
    <alternativeName>
        <fullName>Olfactory receptor 143</fullName>
    </alternativeName>
    <alternativeName>
        <fullName>Olfactory receptor 170-6</fullName>
    </alternativeName>
    <alternativeName>
        <fullName>Olfactory receptor 7A</fullName>
    </alternativeName>
</protein>
<gene>
    <name evidence="6" type="primary">Or8c8</name>
    <name type="synonym">Mor170-6</name>
    <name evidence="6" type="synonym">Olfr143</name>
    <name type="synonym">Olfr7</name>
</gene>
<accession>P34985</accession>
<accession>Q9EQB3</accession>
<keyword id="KW-1003">Cell membrane</keyword>
<keyword id="KW-1015">Disulfide bond</keyword>
<keyword id="KW-0297">G-protein coupled receptor</keyword>
<keyword id="KW-0325">Glycoprotein</keyword>
<keyword id="KW-0472">Membrane</keyword>
<keyword id="KW-0552">Olfaction</keyword>
<keyword id="KW-0675">Receptor</keyword>
<keyword id="KW-1185">Reference proteome</keyword>
<keyword id="KW-0716">Sensory transduction</keyword>
<keyword id="KW-0807">Transducer</keyword>
<keyword id="KW-0812">Transmembrane</keyword>
<keyword id="KW-1133">Transmembrane helix</keyword>
<comment type="function">
    <text evidence="5">Potential odorant receptor.</text>
</comment>
<comment type="subcellular location">
    <subcellularLocation>
        <location evidence="5">Cell membrane</location>
        <topology evidence="1">Multi-pass membrane protein</topology>
    </subcellularLocation>
</comment>
<comment type="tissue specificity">
    <text evidence="3">Expressed in neurons in the olfactory epithelium.</text>
</comment>
<comment type="similarity">
    <text evidence="2">Belongs to the G-protein coupled receptor 1 family.</text>
</comment>
<sequence>MMQITMENKSSVSEFILMGLTDQPELQLPLFVLFLMNYTATVMGNLTLMNLICLNSNLHTPMYFFLFNLSFIDFCYSMVFTPKMLMSFILEKNTISFGGCMAQLFFFLFFVNSESYVLTAMAYDRYVAICKPLTYKVIMSPKICCLLIFSSYLMGFASAMAHTGCMIRLSFCDSNIINHYMCDIFPLLPLSCSSTYVNELMSSVVVGSAIILCCLIILISYAMILFNIIHMSSGKGWSKALGTCGSHIITVSLFYGSGLLAYVKPSSAKTVGQGKFFSVFYTLLVPMLNPLIYSLRNKDVKLAVKKTWKRITS</sequence>
<proteinExistence type="evidence at transcript level"/>
<dbReference type="EMBL" id="AF282276">
    <property type="protein sequence ID" value="AAG39861.1"/>
    <property type="molecule type" value="Genomic_DNA"/>
</dbReference>
<dbReference type="EMBL" id="AY073288">
    <property type="protein sequence ID" value="AAL60951.1"/>
    <property type="molecule type" value="Genomic_DNA"/>
</dbReference>
<dbReference type="EMBL" id="AY318078">
    <property type="protein sequence ID" value="AAP71370.1"/>
    <property type="molecule type" value="Genomic_DNA"/>
</dbReference>
<dbReference type="EMBL" id="L14568">
    <property type="protein sequence ID" value="AAA39852.1"/>
    <property type="molecule type" value="Genomic_DNA"/>
</dbReference>
<dbReference type="CCDS" id="CCDS23002.1"/>
<dbReference type="PIR" id="A40745">
    <property type="entry name" value="A40745"/>
</dbReference>
<dbReference type="SMR" id="P34985"/>
<dbReference type="FunCoup" id="P34985">
    <property type="interactions" value="189"/>
</dbReference>
<dbReference type="STRING" id="10090.ENSMUSP00000091388"/>
<dbReference type="GlyCosmos" id="P34985">
    <property type="glycosylation" value="1 site, No reported glycans"/>
</dbReference>
<dbReference type="GlyGen" id="P34985">
    <property type="glycosylation" value="1 site"/>
</dbReference>
<dbReference type="iPTMnet" id="P34985"/>
<dbReference type="PhosphoSitePlus" id="P34985"/>
<dbReference type="PaxDb" id="10090-ENSMUSP00000091388"/>
<dbReference type="AGR" id="MGI:2177526"/>
<dbReference type="MGI" id="MGI:2177526">
    <property type="gene designation" value="Or8c8"/>
</dbReference>
<dbReference type="eggNOG" id="ENOG502TKYT">
    <property type="taxonomic scope" value="Eukaryota"/>
</dbReference>
<dbReference type="InParanoid" id="P34985"/>
<dbReference type="OrthoDB" id="9591484at2759"/>
<dbReference type="PhylomeDB" id="P34985"/>
<dbReference type="PRO" id="PR:P34985"/>
<dbReference type="Proteomes" id="UP000000589">
    <property type="component" value="Unplaced"/>
</dbReference>
<dbReference type="RNAct" id="P34985">
    <property type="molecule type" value="protein"/>
</dbReference>
<dbReference type="GO" id="GO:0016020">
    <property type="term" value="C:membrane"/>
    <property type="evidence" value="ECO:0000247"/>
    <property type="project" value="MGI"/>
</dbReference>
<dbReference type="GO" id="GO:0005886">
    <property type="term" value="C:plasma membrane"/>
    <property type="evidence" value="ECO:0007669"/>
    <property type="project" value="UniProtKB-SubCell"/>
</dbReference>
<dbReference type="GO" id="GO:0004930">
    <property type="term" value="F:G protein-coupled receptor activity"/>
    <property type="evidence" value="ECO:0007669"/>
    <property type="project" value="UniProtKB-KW"/>
</dbReference>
<dbReference type="GO" id="GO:0004984">
    <property type="term" value="F:olfactory receptor activity"/>
    <property type="evidence" value="ECO:0000247"/>
    <property type="project" value="MGI"/>
</dbReference>
<dbReference type="GO" id="GO:0007186">
    <property type="term" value="P:G protein-coupled receptor signaling pathway"/>
    <property type="evidence" value="ECO:0000247"/>
    <property type="project" value="MGI"/>
</dbReference>
<dbReference type="GO" id="GO:0007608">
    <property type="term" value="P:sensory perception of smell"/>
    <property type="evidence" value="ECO:0000247"/>
    <property type="project" value="MGI"/>
</dbReference>
<dbReference type="CDD" id="cd15405">
    <property type="entry name" value="7tmA_OR8B-like"/>
    <property type="match status" value="1"/>
</dbReference>
<dbReference type="FunFam" id="1.20.1070.10:FF:000004">
    <property type="entry name" value="Olfactory receptor"/>
    <property type="match status" value="1"/>
</dbReference>
<dbReference type="Gene3D" id="1.20.1070.10">
    <property type="entry name" value="Rhodopsin 7-helix transmembrane proteins"/>
    <property type="match status" value="1"/>
</dbReference>
<dbReference type="InterPro" id="IPR000276">
    <property type="entry name" value="GPCR_Rhodpsn"/>
</dbReference>
<dbReference type="InterPro" id="IPR017452">
    <property type="entry name" value="GPCR_Rhodpsn_7TM"/>
</dbReference>
<dbReference type="InterPro" id="IPR000725">
    <property type="entry name" value="Olfact_rcpt"/>
</dbReference>
<dbReference type="PANTHER" id="PTHR48018">
    <property type="entry name" value="OLFACTORY RECEPTOR"/>
    <property type="match status" value="1"/>
</dbReference>
<dbReference type="Pfam" id="PF13853">
    <property type="entry name" value="7tm_4"/>
    <property type="match status" value="1"/>
</dbReference>
<dbReference type="PRINTS" id="PR00237">
    <property type="entry name" value="GPCRRHODOPSN"/>
</dbReference>
<dbReference type="PRINTS" id="PR00245">
    <property type="entry name" value="OLFACTORYR"/>
</dbReference>
<dbReference type="SUPFAM" id="SSF81321">
    <property type="entry name" value="Family A G protein-coupled receptor-like"/>
    <property type="match status" value="1"/>
</dbReference>
<dbReference type="PROSITE" id="PS00237">
    <property type="entry name" value="G_PROTEIN_RECEP_F1_1"/>
    <property type="match status" value="1"/>
</dbReference>
<dbReference type="PROSITE" id="PS50262">
    <property type="entry name" value="G_PROTEIN_RECEP_F1_2"/>
    <property type="match status" value="1"/>
</dbReference>
<organism>
    <name type="scientific">Mus musculus</name>
    <name type="common">Mouse</name>
    <dbReference type="NCBI Taxonomy" id="10090"/>
    <lineage>
        <taxon>Eukaryota</taxon>
        <taxon>Metazoa</taxon>
        <taxon>Chordata</taxon>
        <taxon>Craniata</taxon>
        <taxon>Vertebrata</taxon>
        <taxon>Euteleostomi</taxon>
        <taxon>Mammalia</taxon>
        <taxon>Eutheria</taxon>
        <taxon>Euarchontoglires</taxon>
        <taxon>Glires</taxon>
        <taxon>Rodentia</taxon>
        <taxon>Myomorpha</taxon>
        <taxon>Muroidea</taxon>
        <taxon>Muridae</taxon>
        <taxon>Murinae</taxon>
        <taxon>Mus</taxon>
        <taxon>Mus</taxon>
    </lineage>
</organism>